<protein>
    <recommendedName>
        <fullName evidence="1">Small ribosomal subunit protein uS14c</fullName>
    </recommendedName>
    <alternativeName>
        <fullName evidence="2">30S ribosomal protein S14, chloroplastic</fullName>
    </alternativeName>
</protein>
<gene>
    <name evidence="1" type="primary">rps14</name>
</gene>
<name>RR14_GOSHI</name>
<sequence length="100" mass="11702">MAKKSLIHREKKRQKLEQKYHLIRRSSKKEISKVPSLSEKWKIHGKLQSSPRNSAPTRLHRRCFSTGRPRANYRDFGLSGHILREMVHACLLPGATRSSW</sequence>
<geneLocation type="chloroplast"/>
<keyword id="KW-0150">Chloroplast</keyword>
<keyword id="KW-0934">Plastid</keyword>
<keyword id="KW-1185">Reference proteome</keyword>
<keyword id="KW-0687">Ribonucleoprotein</keyword>
<keyword id="KW-0689">Ribosomal protein</keyword>
<keyword id="KW-0694">RNA-binding</keyword>
<keyword id="KW-0699">rRNA-binding</keyword>
<organism>
    <name type="scientific">Gossypium hirsutum</name>
    <name type="common">Upland cotton</name>
    <name type="synonym">Gossypium mexicanum</name>
    <dbReference type="NCBI Taxonomy" id="3635"/>
    <lineage>
        <taxon>Eukaryota</taxon>
        <taxon>Viridiplantae</taxon>
        <taxon>Streptophyta</taxon>
        <taxon>Embryophyta</taxon>
        <taxon>Tracheophyta</taxon>
        <taxon>Spermatophyta</taxon>
        <taxon>Magnoliopsida</taxon>
        <taxon>eudicotyledons</taxon>
        <taxon>Gunneridae</taxon>
        <taxon>Pentapetalae</taxon>
        <taxon>rosids</taxon>
        <taxon>malvids</taxon>
        <taxon>Malvales</taxon>
        <taxon>Malvaceae</taxon>
        <taxon>Malvoideae</taxon>
        <taxon>Gossypium</taxon>
    </lineage>
</organism>
<feature type="chain" id="PRO_0000276679" description="Small ribosomal subunit protein uS14c">
    <location>
        <begin position="1"/>
        <end position="100"/>
    </location>
</feature>
<accession>Q2L904</accession>
<reference key="1">
    <citation type="journal article" date="2006" name="BMC Genomics">
        <title>The complete chloroplast genome sequence of Gossypium hirsutum: organization and phylogenetic relationships to other angiosperms.</title>
        <authorList>
            <person name="Lee S.-B."/>
            <person name="Kaittanis C."/>
            <person name="Jansen R.K."/>
            <person name="Hostetler J.B."/>
            <person name="Tallon L.J."/>
            <person name="Town C.D."/>
            <person name="Daniell H."/>
        </authorList>
    </citation>
    <scope>NUCLEOTIDE SEQUENCE [LARGE SCALE GENOMIC DNA]</scope>
    <source>
        <strain>cv. Coker 310FR</strain>
    </source>
</reference>
<proteinExistence type="inferred from homology"/>
<comment type="function">
    <text evidence="1">Binds 16S rRNA, required for the assembly of 30S particles.</text>
</comment>
<comment type="subunit">
    <text evidence="1">Part of the 30S ribosomal subunit.</text>
</comment>
<comment type="subcellular location">
    <subcellularLocation>
        <location>Plastid</location>
        <location>Chloroplast</location>
    </subcellularLocation>
</comment>
<comment type="similarity">
    <text evidence="1">Belongs to the universal ribosomal protein uS14 family.</text>
</comment>
<evidence type="ECO:0000255" key="1">
    <source>
        <dbReference type="HAMAP-Rule" id="MF_00537"/>
    </source>
</evidence>
<evidence type="ECO:0000305" key="2"/>
<dbReference type="EMBL" id="DQ345959">
    <property type="protein sequence ID" value="ABC73626.1"/>
    <property type="molecule type" value="Genomic_DNA"/>
</dbReference>
<dbReference type="RefSeq" id="YP_538933.1">
    <property type="nucleotide sequence ID" value="NC_007944.1"/>
</dbReference>
<dbReference type="SMR" id="Q2L904"/>
<dbReference type="GeneID" id="3989212"/>
<dbReference type="KEGG" id="ghi:3989212"/>
<dbReference type="OrthoDB" id="12716at41938"/>
<dbReference type="Proteomes" id="UP000189702">
    <property type="component" value="Chloroplast Pltd"/>
</dbReference>
<dbReference type="GO" id="GO:0009507">
    <property type="term" value="C:chloroplast"/>
    <property type="evidence" value="ECO:0007669"/>
    <property type="project" value="UniProtKB-SubCell"/>
</dbReference>
<dbReference type="GO" id="GO:0015935">
    <property type="term" value="C:small ribosomal subunit"/>
    <property type="evidence" value="ECO:0000318"/>
    <property type="project" value="GO_Central"/>
</dbReference>
<dbReference type="GO" id="GO:0019843">
    <property type="term" value="F:rRNA binding"/>
    <property type="evidence" value="ECO:0007669"/>
    <property type="project" value="UniProtKB-UniRule"/>
</dbReference>
<dbReference type="GO" id="GO:0003735">
    <property type="term" value="F:structural constituent of ribosome"/>
    <property type="evidence" value="ECO:0000318"/>
    <property type="project" value="GO_Central"/>
</dbReference>
<dbReference type="GO" id="GO:0006412">
    <property type="term" value="P:translation"/>
    <property type="evidence" value="ECO:0000318"/>
    <property type="project" value="GO_Central"/>
</dbReference>
<dbReference type="FunFam" id="1.10.287.1480:FF:000001">
    <property type="entry name" value="30S ribosomal protein S14"/>
    <property type="match status" value="1"/>
</dbReference>
<dbReference type="Gene3D" id="1.10.287.1480">
    <property type="match status" value="1"/>
</dbReference>
<dbReference type="HAMAP" id="MF_00537">
    <property type="entry name" value="Ribosomal_uS14_1"/>
    <property type="match status" value="1"/>
</dbReference>
<dbReference type="InterPro" id="IPR001209">
    <property type="entry name" value="Ribosomal_uS14"/>
</dbReference>
<dbReference type="InterPro" id="IPR023036">
    <property type="entry name" value="Ribosomal_uS14_bac/plastid"/>
</dbReference>
<dbReference type="InterPro" id="IPR018271">
    <property type="entry name" value="Ribosomal_uS14_CS"/>
</dbReference>
<dbReference type="NCBIfam" id="NF006477">
    <property type="entry name" value="PRK08881.1"/>
    <property type="match status" value="1"/>
</dbReference>
<dbReference type="PANTHER" id="PTHR19836">
    <property type="entry name" value="30S RIBOSOMAL PROTEIN S14"/>
    <property type="match status" value="1"/>
</dbReference>
<dbReference type="PANTHER" id="PTHR19836:SF19">
    <property type="entry name" value="SMALL RIBOSOMAL SUBUNIT PROTEIN US14M"/>
    <property type="match status" value="1"/>
</dbReference>
<dbReference type="Pfam" id="PF00253">
    <property type="entry name" value="Ribosomal_S14"/>
    <property type="match status" value="1"/>
</dbReference>
<dbReference type="SUPFAM" id="SSF57716">
    <property type="entry name" value="Glucocorticoid receptor-like (DNA-binding domain)"/>
    <property type="match status" value="1"/>
</dbReference>
<dbReference type="PROSITE" id="PS00527">
    <property type="entry name" value="RIBOSOMAL_S14"/>
    <property type="match status" value="1"/>
</dbReference>